<sequence length="430" mass="45115">MTAPLKAVEGSVDLPALMLQLGRQARSAARVLAIAPTAQKNLALAAMERAIRVNAAAILAANAEDVAEVKASGASSAFIDRLTLTPARIAAMADGIKVIHDIADPVGAVTERWQRPNGMTIERVRVPLGVIGVIFESRPNVTADAGVLGLKSGNAVMLRGGSDSFRSCRAIHDCLVQGLREADLPEAAITLVPVRDRAAVGLMLSGLNGNVDVIVPRGGKSLVARVEAEARVPVFAHLEGVNHVYVDRGADLAMAKAIVLNAKMRRPGVCGAAETLLVDRAAAEADLAPLLSVLIESGCEVRGDAEMQRVDTRVKPVAEEDWSTEYGEPIIAAKVVDGLDGALLHIARYGSHHTEAIVTQDEAAAARFLNEVDAAIVLHNASTQFADGGEFGFGAEIGIATGKFHARGPVGAEQLTSFKYRVHGTGQTRP</sequence>
<proteinExistence type="inferred from homology"/>
<dbReference type="EC" id="1.2.1.41" evidence="1"/>
<dbReference type="EMBL" id="CP000463">
    <property type="protein sequence ID" value="ABJ04225.1"/>
    <property type="molecule type" value="Genomic_DNA"/>
</dbReference>
<dbReference type="SMR" id="Q07V09"/>
<dbReference type="STRING" id="316055.RPE_0266"/>
<dbReference type="KEGG" id="rpe:RPE_0266"/>
<dbReference type="eggNOG" id="COG0014">
    <property type="taxonomic scope" value="Bacteria"/>
</dbReference>
<dbReference type="HOGENOM" id="CLU_030231_0_0_5"/>
<dbReference type="OrthoDB" id="9809970at2"/>
<dbReference type="UniPathway" id="UPA00098">
    <property type="reaction ID" value="UER00360"/>
</dbReference>
<dbReference type="GO" id="GO:0005737">
    <property type="term" value="C:cytoplasm"/>
    <property type="evidence" value="ECO:0007669"/>
    <property type="project" value="UniProtKB-SubCell"/>
</dbReference>
<dbReference type="GO" id="GO:0004350">
    <property type="term" value="F:glutamate-5-semialdehyde dehydrogenase activity"/>
    <property type="evidence" value="ECO:0007669"/>
    <property type="project" value="UniProtKB-UniRule"/>
</dbReference>
<dbReference type="GO" id="GO:0050661">
    <property type="term" value="F:NADP binding"/>
    <property type="evidence" value="ECO:0007669"/>
    <property type="project" value="InterPro"/>
</dbReference>
<dbReference type="GO" id="GO:0055129">
    <property type="term" value="P:L-proline biosynthetic process"/>
    <property type="evidence" value="ECO:0007669"/>
    <property type="project" value="UniProtKB-UniRule"/>
</dbReference>
<dbReference type="CDD" id="cd07079">
    <property type="entry name" value="ALDH_F18-19_ProA-GPR"/>
    <property type="match status" value="1"/>
</dbReference>
<dbReference type="Gene3D" id="3.40.605.10">
    <property type="entry name" value="Aldehyde Dehydrogenase, Chain A, domain 1"/>
    <property type="match status" value="1"/>
</dbReference>
<dbReference type="Gene3D" id="3.40.309.10">
    <property type="entry name" value="Aldehyde Dehydrogenase, Chain A, domain 2"/>
    <property type="match status" value="1"/>
</dbReference>
<dbReference type="HAMAP" id="MF_00412">
    <property type="entry name" value="ProA"/>
    <property type="match status" value="1"/>
</dbReference>
<dbReference type="InterPro" id="IPR016161">
    <property type="entry name" value="Ald_DH/histidinol_DH"/>
</dbReference>
<dbReference type="InterPro" id="IPR016163">
    <property type="entry name" value="Ald_DH_C"/>
</dbReference>
<dbReference type="InterPro" id="IPR016162">
    <property type="entry name" value="Ald_DH_N"/>
</dbReference>
<dbReference type="InterPro" id="IPR015590">
    <property type="entry name" value="Aldehyde_DH_dom"/>
</dbReference>
<dbReference type="InterPro" id="IPR020593">
    <property type="entry name" value="G-glutamylP_reductase_CS"/>
</dbReference>
<dbReference type="InterPro" id="IPR012134">
    <property type="entry name" value="Glu-5-SA_DH"/>
</dbReference>
<dbReference type="InterPro" id="IPR000965">
    <property type="entry name" value="GPR_dom"/>
</dbReference>
<dbReference type="NCBIfam" id="NF001221">
    <property type="entry name" value="PRK00197.1"/>
    <property type="match status" value="1"/>
</dbReference>
<dbReference type="NCBIfam" id="TIGR00407">
    <property type="entry name" value="proA"/>
    <property type="match status" value="1"/>
</dbReference>
<dbReference type="PANTHER" id="PTHR11063:SF8">
    <property type="entry name" value="DELTA-1-PYRROLINE-5-CARBOXYLATE SYNTHASE"/>
    <property type="match status" value="1"/>
</dbReference>
<dbReference type="PANTHER" id="PTHR11063">
    <property type="entry name" value="GLUTAMATE SEMIALDEHYDE DEHYDROGENASE"/>
    <property type="match status" value="1"/>
</dbReference>
<dbReference type="Pfam" id="PF00171">
    <property type="entry name" value="Aldedh"/>
    <property type="match status" value="1"/>
</dbReference>
<dbReference type="PIRSF" id="PIRSF000151">
    <property type="entry name" value="GPR"/>
    <property type="match status" value="1"/>
</dbReference>
<dbReference type="SUPFAM" id="SSF53720">
    <property type="entry name" value="ALDH-like"/>
    <property type="match status" value="1"/>
</dbReference>
<dbReference type="PROSITE" id="PS01223">
    <property type="entry name" value="PROA"/>
    <property type="match status" value="1"/>
</dbReference>
<keyword id="KW-0028">Amino-acid biosynthesis</keyword>
<keyword id="KW-0963">Cytoplasm</keyword>
<keyword id="KW-0521">NADP</keyword>
<keyword id="KW-0560">Oxidoreductase</keyword>
<keyword id="KW-0641">Proline biosynthesis</keyword>
<protein>
    <recommendedName>
        <fullName evidence="1">Gamma-glutamyl phosphate reductase</fullName>
        <shortName evidence="1">GPR</shortName>
        <ecNumber evidence="1">1.2.1.41</ecNumber>
    </recommendedName>
    <alternativeName>
        <fullName evidence="1">Glutamate-5-semialdehyde dehydrogenase</fullName>
    </alternativeName>
    <alternativeName>
        <fullName evidence="1">Glutamyl-gamma-semialdehyde dehydrogenase</fullName>
        <shortName evidence="1">GSA dehydrogenase</shortName>
    </alternativeName>
</protein>
<name>PROA_RHOP5</name>
<gene>
    <name evidence="1" type="primary">proA</name>
    <name type="ordered locus">RPE_0266</name>
</gene>
<comment type="function">
    <text evidence="1">Catalyzes the NADPH-dependent reduction of L-glutamate 5-phosphate into L-glutamate 5-semialdehyde and phosphate. The product spontaneously undergoes cyclization to form 1-pyrroline-5-carboxylate.</text>
</comment>
<comment type="catalytic activity">
    <reaction evidence="1">
        <text>L-glutamate 5-semialdehyde + phosphate + NADP(+) = L-glutamyl 5-phosphate + NADPH + H(+)</text>
        <dbReference type="Rhea" id="RHEA:19541"/>
        <dbReference type="ChEBI" id="CHEBI:15378"/>
        <dbReference type="ChEBI" id="CHEBI:43474"/>
        <dbReference type="ChEBI" id="CHEBI:57783"/>
        <dbReference type="ChEBI" id="CHEBI:58066"/>
        <dbReference type="ChEBI" id="CHEBI:58274"/>
        <dbReference type="ChEBI" id="CHEBI:58349"/>
        <dbReference type="EC" id="1.2.1.41"/>
    </reaction>
</comment>
<comment type="pathway">
    <text evidence="1">Amino-acid biosynthesis; L-proline biosynthesis; L-glutamate 5-semialdehyde from L-glutamate: step 2/2.</text>
</comment>
<comment type="subcellular location">
    <subcellularLocation>
        <location evidence="1">Cytoplasm</location>
    </subcellularLocation>
</comment>
<comment type="similarity">
    <text evidence="1">Belongs to the gamma-glutamyl phosphate reductase family.</text>
</comment>
<evidence type="ECO:0000255" key="1">
    <source>
        <dbReference type="HAMAP-Rule" id="MF_00412"/>
    </source>
</evidence>
<accession>Q07V09</accession>
<feature type="chain" id="PRO_1000049989" description="Gamma-glutamyl phosphate reductase">
    <location>
        <begin position="1"/>
        <end position="430"/>
    </location>
</feature>
<reference key="1">
    <citation type="submission" date="2006-09" db="EMBL/GenBank/DDBJ databases">
        <title>Complete sequence of Rhodopseudomonas palustris BisA53.</title>
        <authorList>
            <consortium name="US DOE Joint Genome Institute"/>
            <person name="Copeland A."/>
            <person name="Lucas S."/>
            <person name="Lapidus A."/>
            <person name="Barry K."/>
            <person name="Detter J.C."/>
            <person name="Glavina del Rio T."/>
            <person name="Hammon N."/>
            <person name="Israni S."/>
            <person name="Dalin E."/>
            <person name="Tice H."/>
            <person name="Pitluck S."/>
            <person name="Chain P."/>
            <person name="Malfatti S."/>
            <person name="Shin M."/>
            <person name="Vergez L."/>
            <person name="Schmutz J."/>
            <person name="Larimer F."/>
            <person name="Land M."/>
            <person name="Hauser L."/>
            <person name="Pelletier D.A."/>
            <person name="Kyrpides N."/>
            <person name="Kim E."/>
            <person name="Harwood C.S."/>
            <person name="Oda Y."/>
            <person name="Richardson P."/>
        </authorList>
    </citation>
    <scope>NUCLEOTIDE SEQUENCE [LARGE SCALE GENOMIC DNA]</scope>
    <source>
        <strain>BisA53</strain>
    </source>
</reference>
<organism>
    <name type="scientific">Rhodopseudomonas palustris (strain BisA53)</name>
    <dbReference type="NCBI Taxonomy" id="316055"/>
    <lineage>
        <taxon>Bacteria</taxon>
        <taxon>Pseudomonadati</taxon>
        <taxon>Pseudomonadota</taxon>
        <taxon>Alphaproteobacteria</taxon>
        <taxon>Hyphomicrobiales</taxon>
        <taxon>Nitrobacteraceae</taxon>
        <taxon>Rhodopseudomonas</taxon>
    </lineage>
</organism>